<proteinExistence type="inferred from homology"/>
<accession>Q332S6</accession>
<feature type="initiator methionine" description="Removed" evidence="1">
    <location>
        <position position="1"/>
    </location>
</feature>
<feature type="chain" id="PRO_0000275986" description="Photosystem I iron-sulfur center">
    <location>
        <begin position="2"/>
        <end position="81"/>
    </location>
</feature>
<feature type="domain" description="4Fe-4S ferredoxin-type 1" evidence="2">
    <location>
        <begin position="2"/>
        <end position="31"/>
    </location>
</feature>
<feature type="domain" description="4Fe-4S ferredoxin-type 2" evidence="2">
    <location>
        <begin position="39"/>
        <end position="68"/>
    </location>
</feature>
<feature type="binding site" evidence="2">
    <location>
        <position position="11"/>
    </location>
    <ligand>
        <name>[4Fe-4S] cluster</name>
        <dbReference type="ChEBI" id="CHEBI:49883"/>
        <label>1</label>
    </ligand>
</feature>
<feature type="binding site" evidence="2">
    <location>
        <position position="14"/>
    </location>
    <ligand>
        <name>[4Fe-4S] cluster</name>
        <dbReference type="ChEBI" id="CHEBI:49883"/>
        <label>1</label>
    </ligand>
</feature>
<feature type="binding site" evidence="2">
    <location>
        <position position="17"/>
    </location>
    <ligand>
        <name>[4Fe-4S] cluster</name>
        <dbReference type="ChEBI" id="CHEBI:49883"/>
        <label>1</label>
    </ligand>
</feature>
<feature type="binding site" evidence="2">
    <location>
        <position position="21"/>
    </location>
    <ligand>
        <name>[4Fe-4S] cluster</name>
        <dbReference type="ChEBI" id="CHEBI:49883"/>
        <label>2</label>
    </ligand>
</feature>
<feature type="binding site" evidence="2">
    <location>
        <position position="48"/>
    </location>
    <ligand>
        <name>[4Fe-4S] cluster</name>
        <dbReference type="ChEBI" id="CHEBI:49883"/>
        <label>2</label>
    </ligand>
</feature>
<feature type="binding site" evidence="2">
    <location>
        <position position="51"/>
    </location>
    <ligand>
        <name>[4Fe-4S] cluster</name>
        <dbReference type="ChEBI" id="CHEBI:49883"/>
        <label>2</label>
    </ligand>
</feature>
<feature type="binding site" evidence="2">
    <location>
        <position position="54"/>
    </location>
    <ligand>
        <name>[4Fe-4S] cluster</name>
        <dbReference type="ChEBI" id="CHEBI:49883"/>
        <label>2</label>
    </ligand>
</feature>
<feature type="binding site" evidence="2">
    <location>
        <position position="58"/>
    </location>
    <ligand>
        <name>[4Fe-4S] cluster</name>
        <dbReference type="ChEBI" id="CHEBI:49883"/>
        <label>1</label>
    </ligand>
</feature>
<keyword id="KW-0004">4Fe-4S</keyword>
<keyword id="KW-0150">Chloroplast</keyword>
<keyword id="KW-0249">Electron transport</keyword>
<keyword id="KW-0408">Iron</keyword>
<keyword id="KW-0411">Iron-sulfur</keyword>
<keyword id="KW-0472">Membrane</keyword>
<keyword id="KW-0479">Metal-binding</keyword>
<keyword id="KW-0560">Oxidoreductase</keyword>
<keyword id="KW-0602">Photosynthesis</keyword>
<keyword id="KW-0603">Photosystem I</keyword>
<keyword id="KW-0934">Plastid</keyword>
<keyword id="KW-0677">Repeat</keyword>
<keyword id="KW-0793">Thylakoid</keyword>
<keyword id="KW-0813">Transport</keyword>
<dbReference type="EC" id="1.97.1.12" evidence="2"/>
<dbReference type="EMBL" id="AP007232">
    <property type="protein sequence ID" value="BAE47646.1"/>
    <property type="molecule type" value="Genomic_DNA"/>
</dbReference>
<dbReference type="EMBL" id="DQ383816">
    <property type="protein sequence ID" value="ABD47287.1"/>
    <property type="molecule type" value="Genomic_DNA"/>
</dbReference>
<dbReference type="RefSeq" id="YP_398379.1">
    <property type="nucleotide sequence ID" value="NC_007578.1"/>
</dbReference>
<dbReference type="SMR" id="Q332S6"/>
<dbReference type="GeneID" id="3772831"/>
<dbReference type="KEGG" id="lsv:3772831"/>
<dbReference type="OrthoDB" id="9at2759"/>
<dbReference type="GO" id="GO:0009535">
    <property type="term" value="C:chloroplast thylakoid membrane"/>
    <property type="evidence" value="ECO:0007669"/>
    <property type="project" value="UniProtKB-SubCell"/>
</dbReference>
<dbReference type="GO" id="GO:0009522">
    <property type="term" value="C:photosystem I"/>
    <property type="evidence" value="ECO:0007669"/>
    <property type="project" value="UniProtKB-KW"/>
</dbReference>
<dbReference type="GO" id="GO:0051539">
    <property type="term" value="F:4 iron, 4 sulfur cluster binding"/>
    <property type="evidence" value="ECO:0007669"/>
    <property type="project" value="UniProtKB-KW"/>
</dbReference>
<dbReference type="GO" id="GO:0009055">
    <property type="term" value="F:electron transfer activity"/>
    <property type="evidence" value="ECO:0007669"/>
    <property type="project" value="UniProtKB-UniRule"/>
</dbReference>
<dbReference type="GO" id="GO:0046872">
    <property type="term" value="F:metal ion binding"/>
    <property type="evidence" value="ECO:0007669"/>
    <property type="project" value="UniProtKB-KW"/>
</dbReference>
<dbReference type="GO" id="GO:0016491">
    <property type="term" value="F:oxidoreductase activity"/>
    <property type="evidence" value="ECO:0007669"/>
    <property type="project" value="UniProtKB-KW"/>
</dbReference>
<dbReference type="GO" id="GO:0009773">
    <property type="term" value="P:photosynthetic electron transport in photosystem I"/>
    <property type="evidence" value="ECO:0007669"/>
    <property type="project" value="InterPro"/>
</dbReference>
<dbReference type="FunFam" id="3.30.70.20:FF:000001">
    <property type="entry name" value="Photosystem I iron-sulfur center"/>
    <property type="match status" value="1"/>
</dbReference>
<dbReference type="Gene3D" id="3.30.70.20">
    <property type="match status" value="1"/>
</dbReference>
<dbReference type="HAMAP" id="MF_01303">
    <property type="entry name" value="PSI_PsaC"/>
    <property type="match status" value="1"/>
</dbReference>
<dbReference type="InterPro" id="IPR017896">
    <property type="entry name" value="4Fe4S_Fe-S-bd"/>
</dbReference>
<dbReference type="InterPro" id="IPR017900">
    <property type="entry name" value="4Fe4S_Fe_S_CS"/>
</dbReference>
<dbReference type="InterPro" id="IPR050157">
    <property type="entry name" value="PSI_iron-sulfur_center"/>
</dbReference>
<dbReference type="InterPro" id="IPR017491">
    <property type="entry name" value="PSI_PsaC"/>
</dbReference>
<dbReference type="NCBIfam" id="TIGR03048">
    <property type="entry name" value="PS_I_psaC"/>
    <property type="match status" value="1"/>
</dbReference>
<dbReference type="PANTHER" id="PTHR24960:SF79">
    <property type="entry name" value="PHOTOSYSTEM I IRON-SULFUR CENTER"/>
    <property type="match status" value="1"/>
</dbReference>
<dbReference type="PANTHER" id="PTHR24960">
    <property type="entry name" value="PHOTOSYSTEM I IRON-SULFUR CENTER-RELATED"/>
    <property type="match status" value="1"/>
</dbReference>
<dbReference type="Pfam" id="PF14697">
    <property type="entry name" value="Fer4_21"/>
    <property type="match status" value="1"/>
</dbReference>
<dbReference type="SUPFAM" id="SSF54862">
    <property type="entry name" value="4Fe-4S ferredoxins"/>
    <property type="match status" value="1"/>
</dbReference>
<dbReference type="PROSITE" id="PS00198">
    <property type="entry name" value="4FE4S_FER_1"/>
    <property type="match status" value="2"/>
</dbReference>
<dbReference type="PROSITE" id="PS51379">
    <property type="entry name" value="4FE4S_FER_2"/>
    <property type="match status" value="2"/>
</dbReference>
<gene>
    <name evidence="2" type="primary">psaC</name>
</gene>
<comment type="function">
    <text evidence="2">Apoprotein for the two 4Fe-4S centers FA and FB of photosystem I (PSI); essential for photochemical activity. FB is the terminal electron acceptor of PSI, donating electrons to ferredoxin. The C-terminus interacts with PsaA/B/D and helps assemble the protein into the PSI complex. Required for binding of PsaD and PsaE to PSI. PSI is a plastocyanin-ferredoxin oxidoreductase, converting photonic excitation into a charge separation, which transfers an electron from the donor P700 chlorophyll pair to the spectroscopically characterized acceptors A0, A1, FX, FA and FB in turn.</text>
</comment>
<comment type="catalytic activity">
    <reaction evidence="2">
        <text>reduced [plastocyanin] + hnu + oxidized [2Fe-2S]-[ferredoxin] = oxidized [plastocyanin] + reduced [2Fe-2S]-[ferredoxin]</text>
        <dbReference type="Rhea" id="RHEA:30407"/>
        <dbReference type="Rhea" id="RHEA-COMP:10000"/>
        <dbReference type="Rhea" id="RHEA-COMP:10001"/>
        <dbReference type="Rhea" id="RHEA-COMP:10039"/>
        <dbReference type="Rhea" id="RHEA-COMP:10040"/>
        <dbReference type="ChEBI" id="CHEBI:29036"/>
        <dbReference type="ChEBI" id="CHEBI:30212"/>
        <dbReference type="ChEBI" id="CHEBI:33737"/>
        <dbReference type="ChEBI" id="CHEBI:33738"/>
        <dbReference type="ChEBI" id="CHEBI:49552"/>
        <dbReference type="EC" id="1.97.1.12"/>
    </reaction>
</comment>
<comment type="cofactor">
    <cofactor evidence="2">
        <name>[4Fe-4S] cluster</name>
        <dbReference type="ChEBI" id="CHEBI:49883"/>
    </cofactor>
    <text evidence="2">Binds 2 [4Fe-4S] clusters. Cluster 2 is most probably the spectroscopically characterized electron acceptor FA and cluster 1 is most probably FB.</text>
</comment>
<comment type="subunit">
    <text evidence="2">The eukaryotic PSI reaction center is composed of at least 11 subunits.</text>
</comment>
<comment type="subcellular location">
    <subcellularLocation>
        <location evidence="2">Plastid</location>
        <location evidence="2">Chloroplast thylakoid membrane</location>
        <topology evidence="2">Peripheral membrane protein</topology>
        <orientation evidence="2">Stromal side</orientation>
    </subcellularLocation>
</comment>
<protein>
    <recommendedName>
        <fullName evidence="2">Photosystem I iron-sulfur center</fullName>
        <ecNumber evidence="2">1.97.1.12</ecNumber>
    </recommendedName>
    <alternativeName>
        <fullName evidence="2">9 kDa polypeptide</fullName>
    </alternativeName>
    <alternativeName>
        <fullName evidence="2">PSI-C</fullName>
    </alternativeName>
    <alternativeName>
        <fullName evidence="2">Photosystem I subunit VII</fullName>
    </alternativeName>
    <alternativeName>
        <fullName evidence="2">PsaC</fullName>
    </alternativeName>
</protein>
<geneLocation type="chloroplast"/>
<evidence type="ECO:0000250" key="1"/>
<evidence type="ECO:0000255" key="2">
    <source>
        <dbReference type="HAMAP-Rule" id="MF_01303"/>
    </source>
</evidence>
<reference key="1">
    <citation type="journal article" date="2006" name="Transgenic Res.">
        <title>Efficient and stable transformation of Lactuca sativa L. cv. Cisco (lettuce) plastids.</title>
        <authorList>
            <person name="Kanamoto H."/>
            <person name="Yamashita A."/>
            <person name="Asao H."/>
            <person name="Okumura S."/>
            <person name="Takase H."/>
            <person name="Hattori M."/>
            <person name="Yokota A."/>
            <person name="Tomizawa K."/>
        </authorList>
    </citation>
    <scope>NUCLEOTIDE SEQUENCE [LARGE SCALE GENOMIC DNA]</scope>
    <source>
        <strain>cv. Cisco</strain>
    </source>
</reference>
<reference key="2">
    <citation type="submission" date="2006-01" db="EMBL/GenBank/DDBJ databases">
        <title>A comparison of the first two published chloroplast genomes in Asteraceae: Lactuca and Helianthus.</title>
        <authorList>
            <person name="Timme R.E."/>
            <person name="Kuehl J.V."/>
            <person name="Boore J.L."/>
            <person name="Jansen R.K."/>
        </authorList>
    </citation>
    <scope>NUCLEOTIDE SEQUENCE [LARGE SCALE GENOMIC DNA]</scope>
    <source>
        <strain>cv. Salinas</strain>
    </source>
</reference>
<name>PSAC_LACSA</name>
<sequence length="81" mass="9038">MSHSVKIYDTCIGCTQCVRACPTDVLEMIPWDGCKAKQIASAPRTEDCVGCKRCESACPTDFLSVRVYLWHETTRSMGIAY</sequence>
<organism>
    <name type="scientific">Lactuca sativa</name>
    <name type="common">Garden lettuce</name>
    <dbReference type="NCBI Taxonomy" id="4236"/>
    <lineage>
        <taxon>Eukaryota</taxon>
        <taxon>Viridiplantae</taxon>
        <taxon>Streptophyta</taxon>
        <taxon>Embryophyta</taxon>
        <taxon>Tracheophyta</taxon>
        <taxon>Spermatophyta</taxon>
        <taxon>Magnoliopsida</taxon>
        <taxon>eudicotyledons</taxon>
        <taxon>Gunneridae</taxon>
        <taxon>Pentapetalae</taxon>
        <taxon>asterids</taxon>
        <taxon>campanulids</taxon>
        <taxon>Asterales</taxon>
        <taxon>Asteraceae</taxon>
        <taxon>Cichorioideae</taxon>
        <taxon>Cichorieae</taxon>
        <taxon>Lactucinae</taxon>
        <taxon>Lactuca</taxon>
    </lineage>
</organism>